<accession>Q54ER0</accession>
<dbReference type="EMBL" id="AAFI02000177">
    <property type="protein sequence ID" value="EAL61678.1"/>
    <property type="status" value="ALT_INIT"/>
    <property type="molecule type" value="Genomic_DNA"/>
</dbReference>
<dbReference type="RefSeq" id="XP_635180.1">
    <property type="nucleotide sequence ID" value="XM_630088.1"/>
</dbReference>
<dbReference type="FunCoup" id="Q54ER0">
    <property type="interactions" value="877"/>
</dbReference>
<dbReference type="PaxDb" id="44689-DDB0183860"/>
<dbReference type="EnsemblProtists" id="EAL61678">
    <property type="protein sequence ID" value="EAL61678"/>
    <property type="gene ID" value="DDB_G0291388"/>
</dbReference>
<dbReference type="GeneID" id="8628126"/>
<dbReference type="KEGG" id="ddi:DDB_G0291388"/>
<dbReference type="dictyBase" id="DDB_G0291388"/>
<dbReference type="VEuPathDB" id="AmoebaDB:DDB_G0291388"/>
<dbReference type="InParanoid" id="Q54ER0"/>
<dbReference type="PRO" id="PR:Q54ER0"/>
<dbReference type="Proteomes" id="UP000002195">
    <property type="component" value="Chromosome 6"/>
</dbReference>
<reference key="1">
    <citation type="journal article" date="2005" name="Nature">
        <title>The genome of the social amoeba Dictyostelium discoideum.</title>
        <authorList>
            <person name="Eichinger L."/>
            <person name="Pachebat J.A."/>
            <person name="Gloeckner G."/>
            <person name="Rajandream M.A."/>
            <person name="Sucgang R."/>
            <person name="Berriman M."/>
            <person name="Song J."/>
            <person name="Olsen R."/>
            <person name="Szafranski K."/>
            <person name="Xu Q."/>
            <person name="Tunggal B."/>
            <person name="Kummerfeld S."/>
            <person name="Madera M."/>
            <person name="Konfortov B.A."/>
            <person name="Rivero F."/>
            <person name="Bankier A.T."/>
            <person name="Lehmann R."/>
            <person name="Hamlin N."/>
            <person name="Davies R."/>
            <person name="Gaudet P."/>
            <person name="Fey P."/>
            <person name="Pilcher K."/>
            <person name="Chen G."/>
            <person name="Saunders D."/>
            <person name="Sodergren E.J."/>
            <person name="Davis P."/>
            <person name="Kerhornou A."/>
            <person name="Nie X."/>
            <person name="Hall N."/>
            <person name="Anjard C."/>
            <person name="Hemphill L."/>
            <person name="Bason N."/>
            <person name="Farbrother P."/>
            <person name="Desany B."/>
            <person name="Just E."/>
            <person name="Morio T."/>
            <person name="Rost R."/>
            <person name="Churcher C.M."/>
            <person name="Cooper J."/>
            <person name="Haydock S."/>
            <person name="van Driessche N."/>
            <person name="Cronin A."/>
            <person name="Goodhead I."/>
            <person name="Muzny D.M."/>
            <person name="Mourier T."/>
            <person name="Pain A."/>
            <person name="Lu M."/>
            <person name="Harper D."/>
            <person name="Lindsay R."/>
            <person name="Hauser H."/>
            <person name="James K.D."/>
            <person name="Quiles M."/>
            <person name="Madan Babu M."/>
            <person name="Saito T."/>
            <person name="Buchrieser C."/>
            <person name="Wardroper A."/>
            <person name="Felder M."/>
            <person name="Thangavelu M."/>
            <person name="Johnson D."/>
            <person name="Knights A."/>
            <person name="Loulseged H."/>
            <person name="Mungall K.L."/>
            <person name="Oliver K."/>
            <person name="Price C."/>
            <person name="Quail M.A."/>
            <person name="Urushihara H."/>
            <person name="Hernandez J."/>
            <person name="Rabbinowitsch E."/>
            <person name="Steffen D."/>
            <person name="Sanders M."/>
            <person name="Ma J."/>
            <person name="Kohara Y."/>
            <person name="Sharp S."/>
            <person name="Simmonds M.N."/>
            <person name="Spiegler S."/>
            <person name="Tivey A."/>
            <person name="Sugano S."/>
            <person name="White B."/>
            <person name="Walker D."/>
            <person name="Woodward J.R."/>
            <person name="Winckler T."/>
            <person name="Tanaka Y."/>
            <person name="Shaulsky G."/>
            <person name="Schleicher M."/>
            <person name="Weinstock G.M."/>
            <person name="Rosenthal A."/>
            <person name="Cox E.C."/>
            <person name="Chisholm R.L."/>
            <person name="Gibbs R.A."/>
            <person name="Loomis W.F."/>
            <person name="Platzer M."/>
            <person name="Kay R.R."/>
            <person name="Williams J.G."/>
            <person name="Dear P.H."/>
            <person name="Noegel A.A."/>
            <person name="Barrell B.G."/>
            <person name="Kuspa A."/>
        </authorList>
    </citation>
    <scope>NUCLEOTIDE SEQUENCE [LARGE SCALE GENOMIC DNA]</scope>
    <source>
        <strain>AX4</strain>
    </source>
</reference>
<organism>
    <name type="scientific">Dictyostelium discoideum</name>
    <name type="common">Social amoeba</name>
    <dbReference type="NCBI Taxonomy" id="44689"/>
    <lineage>
        <taxon>Eukaryota</taxon>
        <taxon>Amoebozoa</taxon>
        <taxon>Evosea</taxon>
        <taxon>Eumycetozoa</taxon>
        <taxon>Dictyostelia</taxon>
        <taxon>Dictyosteliales</taxon>
        <taxon>Dictyosteliaceae</taxon>
        <taxon>Dictyostelium</taxon>
    </lineage>
</organism>
<sequence>MLVYKMLWNKTILGMKSINTGNRKADTACAKLSKLVQLTNILINKEGIPFKLVGDTKRIVFRELDGDTTANK</sequence>
<protein>
    <recommendedName>
        <fullName>Putative uncharacterized protein DDB_G0291388</fullName>
    </recommendedName>
</protein>
<proteinExistence type="predicted"/>
<gene>
    <name type="ORF">DDB_G0291388</name>
</gene>
<feature type="chain" id="PRO_0000346889" description="Putative uncharacterized protein DDB_G0291388">
    <location>
        <begin position="1"/>
        <end position="72"/>
    </location>
</feature>
<name>Y3860_DICDI</name>
<keyword id="KW-1185">Reference proteome</keyword>
<comment type="sequence caution" evidence="1">
    <conflict type="erroneous initiation">
        <sequence resource="EMBL-CDS" id="EAL61678"/>
    </conflict>
    <text>Truncated N-terminus.</text>
</comment>
<evidence type="ECO:0000305" key="1"/>